<sequence>MGDQQNAGKCPVMHGAMTSAGKSNMDWWPNNLNLDILHQHDRKTNPMGEDFDYREEVQKLDFDAVKKDLTELMTNSQDWWPADWGHYGGLMIRMAWHAAGSYRVADGRGGGGTGNQRFAPINSWPDNANLDKARRLLWPIKKKYGNKLSWADLIILAGNVAYESMGFKTFGFSFGREDIWHPEKDTYWGSEKEWLAPSDNPESRYSGDRESLENPLAAVMMGLIYVNPEGVDGNPDPLKTAEDVRVTFARMAMNDEETVALTAGGHTVGKCHGNGDAEKIGPEPEAADVEEQGLGWRNLASRGVGRDTVTSGLEGAWTTHPTRWDDGYFDMLLNHEWELTKSPAGAWQWQPVDIKEEDMPVDVEDPSIRHMPMMTDADMAMKMDPEYRKYAERFQKDPEYFNEVFARAWFKLIHRDMGPKTRYIGPEAPDEDLIWQDPVPAGNTGYDVDAVKAKIADSGLSISEMVATAWDSARTFRGSDYRGGANGARIRLAPQKDWEGNEPERLSKVLGVLEGIAADTGASVADTIVLAGNVGIEQAAKAAGHDITVPFAPGRGDASQEMTDEESFEYLEPLSDGYRNWLKKDYAVAPEEMMLDRTQLLGLTAPEMTVLIGGMRVLGTNHGGTQHGVFTDREGQLTNDFFVNLTDMNYAWEPVGNNLYEIRDRKTGETRWTATRVDLVFGSNSILRSYAEVYAQDDNKEKFVKDFVAAWNKVMNADRFDLA</sequence>
<keyword id="KW-0349">Heme</keyword>
<keyword id="KW-0376">Hydrogen peroxide</keyword>
<keyword id="KW-0408">Iron</keyword>
<keyword id="KW-0479">Metal-binding</keyword>
<keyword id="KW-0560">Oxidoreductase</keyword>
<keyword id="KW-0575">Peroxidase</keyword>
<keyword id="KW-1185">Reference proteome</keyword>
<protein>
    <recommendedName>
        <fullName evidence="1">Catalase-peroxidase</fullName>
        <shortName evidence="1">CP</shortName>
        <ecNumber evidence="1">1.11.1.21</ecNumber>
    </recommendedName>
    <alternativeName>
        <fullName evidence="1">Peroxidase/catalase</fullName>
    </alternativeName>
</protein>
<gene>
    <name evidence="1" type="primary">katG</name>
    <name type="ordered locus">Mlg_1522</name>
</gene>
<organism>
    <name type="scientific">Alkalilimnicola ehrlichii (strain ATCC BAA-1101 / DSM 17681 / MLHE-1)</name>
    <dbReference type="NCBI Taxonomy" id="187272"/>
    <lineage>
        <taxon>Bacteria</taxon>
        <taxon>Pseudomonadati</taxon>
        <taxon>Pseudomonadota</taxon>
        <taxon>Gammaproteobacteria</taxon>
        <taxon>Chromatiales</taxon>
        <taxon>Ectothiorhodospiraceae</taxon>
        <taxon>Alkalilimnicola</taxon>
    </lineage>
</organism>
<proteinExistence type="inferred from homology"/>
<dbReference type="EC" id="1.11.1.21" evidence="1"/>
<dbReference type="EMBL" id="CP000453">
    <property type="protein sequence ID" value="ABI56871.1"/>
    <property type="molecule type" value="Genomic_DNA"/>
</dbReference>
<dbReference type="RefSeq" id="WP_011629266.1">
    <property type="nucleotide sequence ID" value="NC_008340.1"/>
</dbReference>
<dbReference type="SMR" id="Q0A8G6"/>
<dbReference type="PeroxiBase" id="3628">
    <property type="entry name" value="AeCP01_MLHE-1"/>
</dbReference>
<dbReference type="KEGG" id="aeh:Mlg_1522"/>
<dbReference type="eggNOG" id="COG0376">
    <property type="taxonomic scope" value="Bacteria"/>
</dbReference>
<dbReference type="HOGENOM" id="CLU_025424_2_0_6"/>
<dbReference type="OrthoDB" id="9759743at2"/>
<dbReference type="Proteomes" id="UP000001962">
    <property type="component" value="Chromosome"/>
</dbReference>
<dbReference type="GO" id="GO:0005829">
    <property type="term" value="C:cytosol"/>
    <property type="evidence" value="ECO:0007669"/>
    <property type="project" value="TreeGrafter"/>
</dbReference>
<dbReference type="GO" id="GO:0004096">
    <property type="term" value="F:catalase activity"/>
    <property type="evidence" value="ECO:0007669"/>
    <property type="project" value="UniProtKB-UniRule"/>
</dbReference>
<dbReference type="GO" id="GO:0020037">
    <property type="term" value="F:heme binding"/>
    <property type="evidence" value="ECO:0007669"/>
    <property type="project" value="InterPro"/>
</dbReference>
<dbReference type="GO" id="GO:0046872">
    <property type="term" value="F:metal ion binding"/>
    <property type="evidence" value="ECO:0007669"/>
    <property type="project" value="UniProtKB-KW"/>
</dbReference>
<dbReference type="GO" id="GO:0070301">
    <property type="term" value="P:cellular response to hydrogen peroxide"/>
    <property type="evidence" value="ECO:0007669"/>
    <property type="project" value="TreeGrafter"/>
</dbReference>
<dbReference type="GO" id="GO:0042744">
    <property type="term" value="P:hydrogen peroxide catabolic process"/>
    <property type="evidence" value="ECO:0007669"/>
    <property type="project" value="UniProtKB-KW"/>
</dbReference>
<dbReference type="CDD" id="cd00649">
    <property type="entry name" value="catalase_peroxidase_1"/>
    <property type="match status" value="1"/>
</dbReference>
<dbReference type="CDD" id="cd08200">
    <property type="entry name" value="catalase_peroxidase_2"/>
    <property type="match status" value="1"/>
</dbReference>
<dbReference type="FunFam" id="1.10.420.10:FF:000004">
    <property type="entry name" value="Catalase-peroxidase"/>
    <property type="match status" value="1"/>
</dbReference>
<dbReference type="FunFam" id="1.10.520.10:FF:000002">
    <property type="entry name" value="Catalase-peroxidase"/>
    <property type="match status" value="1"/>
</dbReference>
<dbReference type="Gene3D" id="1.10.520.10">
    <property type="match status" value="2"/>
</dbReference>
<dbReference type="Gene3D" id="1.10.420.10">
    <property type="entry name" value="Peroxidase, domain 2"/>
    <property type="match status" value="2"/>
</dbReference>
<dbReference type="HAMAP" id="MF_01961">
    <property type="entry name" value="Catal_peroxid"/>
    <property type="match status" value="1"/>
</dbReference>
<dbReference type="InterPro" id="IPR000763">
    <property type="entry name" value="Catalase_peroxidase"/>
</dbReference>
<dbReference type="InterPro" id="IPR002016">
    <property type="entry name" value="Haem_peroxidase"/>
</dbReference>
<dbReference type="InterPro" id="IPR010255">
    <property type="entry name" value="Haem_peroxidase_sf"/>
</dbReference>
<dbReference type="InterPro" id="IPR019794">
    <property type="entry name" value="Peroxidases_AS"/>
</dbReference>
<dbReference type="NCBIfam" id="TIGR00198">
    <property type="entry name" value="cat_per_HPI"/>
    <property type="match status" value="1"/>
</dbReference>
<dbReference type="NCBIfam" id="NF011635">
    <property type="entry name" value="PRK15061.1"/>
    <property type="match status" value="1"/>
</dbReference>
<dbReference type="PANTHER" id="PTHR30555:SF6">
    <property type="entry name" value="CATALASE-PEROXIDASE"/>
    <property type="match status" value="1"/>
</dbReference>
<dbReference type="PANTHER" id="PTHR30555">
    <property type="entry name" value="HYDROPEROXIDASE I, BIFUNCTIONAL CATALASE-PEROXIDASE"/>
    <property type="match status" value="1"/>
</dbReference>
<dbReference type="Pfam" id="PF00141">
    <property type="entry name" value="peroxidase"/>
    <property type="match status" value="2"/>
</dbReference>
<dbReference type="PRINTS" id="PR00460">
    <property type="entry name" value="BPEROXIDASE"/>
</dbReference>
<dbReference type="PRINTS" id="PR00458">
    <property type="entry name" value="PEROXIDASE"/>
</dbReference>
<dbReference type="SUPFAM" id="SSF48113">
    <property type="entry name" value="Heme-dependent peroxidases"/>
    <property type="match status" value="2"/>
</dbReference>
<dbReference type="PROSITE" id="PS00436">
    <property type="entry name" value="PEROXIDASE_2"/>
    <property type="match status" value="1"/>
</dbReference>
<dbReference type="PROSITE" id="PS50873">
    <property type="entry name" value="PEROXIDASE_4"/>
    <property type="match status" value="1"/>
</dbReference>
<evidence type="ECO:0000255" key="1">
    <source>
        <dbReference type="HAMAP-Rule" id="MF_01961"/>
    </source>
</evidence>
<comment type="function">
    <text evidence="1">Bifunctional enzyme with both catalase and broad-spectrum peroxidase activity.</text>
</comment>
<comment type="catalytic activity">
    <reaction evidence="1">
        <text>H2O2 + AH2 = A + 2 H2O</text>
        <dbReference type="Rhea" id="RHEA:30275"/>
        <dbReference type="ChEBI" id="CHEBI:13193"/>
        <dbReference type="ChEBI" id="CHEBI:15377"/>
        <dbReference type="ChEBI" id="CHEBI:16240"/>
        <dbReference type="ChEBI" id="CHEBI:17499"/>
        <dbReference type="EC" id="1.11.1.21"/>
    </reaction>
</comment>
<comment type="catalytic activity">
    <reaction evidence="1">
        <text>2 H2O2 = O2 + 2 H2O</text>
        <dbReference type="Rhea" id="RHEA:20309"/>
        <dbReference type="ChEBI" id="CHEBI:15377"/>
        <dbReference type="ChEBI" id="CHEBI:15379"/>
        <dbReference type="ChEBI" id="CHEBI:16240"/>
        <dbReference type="EC" id="1.11.1.21"/>
    </reaction>
</comment>
<comment type="cofactor">
    <cofactor evidence="1">
        <name>heme b</name>
        <dbReference type="ChEBI" id="CHEBI:60344"/>
    </cofactor>
    <text evidence="1">Binds 1 heme b (iron(II)-protoporphyrin IX) group per dimer.</text>
</comment>
<comment type="subunit">
    <text evidence="1">Homodimer or homotetramer.</text>
</comment>
<comment type="PTM">
    <text evidence="1">Formation of the three residue Trp-Tyr-Met cross-link is important for the catalase, but not the peroxidase activity of the enzyme.</text>
</comment>
<comment type="similarity">
    <text evidence="1">Belongs to the peroxidase family. Peroxidase/catalase subfamily.</text>
</comment>
<reference key="1">
    <citation type="submission" date="2006-08" db="EMBL/GenBank/DDBJ databases">
        <title>Complete sequence of Alkalilimnicola ehrilichei MLHE-1.</title>
        <authorList>
            <person name="Copeland A."/>
            <person name="Lucas S."/>
            <person name="Lapidus A."/>
            <person name="Barry K."/>
            <person name="Detter J.C."/>
            <person name="Glavina del Rio T."/>
            <person name="Hammon N."/>
            <person name="Israni S."/>
            <person name="Dalin E."/>
            <person name="Tice H."/>
            <person name="Pitluck S."/>
            <person name="Sims D."/>
            <person name="Brettin T."/>
            <person name="Bruce D."/>
            <person name="Han C."/>
            <person name="Tapia R."/>
            <person name="Gilna P."/>
            <person name="Schmutz J."/>
            <person name="Larimer F."/>
            <person name="Land M."/>
            <person name="Hauser L."/>
            <person name="Kyrpides N."/>
            <person name="Mikhailova N."/>
            <person name="Oremland R.S."/>
            <person name="Hoeft S.E."/>
            <person name="Switzer-Blum J."/>
            <person name="Kulp T."/>
            <person name="King G."/>
            <person name="Tabita R."/>
            <person name="Witte B."/>
            <person name="Santini J.M."/>
            <person name="Basu P."/>
            <person name="Hollibaugh J.T."/>
            <person name="Xie G."/>
            <person name="Stolz J.F."/>
            <person name="Richardson P."/>
        </authorList>
    </citation>
    <scope>NUCLEOTIDE SEQUENCE [LARGE SCALE GENOMIC DNA]</scope>
    <source>
        <strain>ATCC BAA-1101 / DSM 17681 / MLHE-1</strain>
    </source>
</reference>
<feature type="chain" id="PRO_0000354717" description="Catalase-peroxidase">
    <location>
        <begin position="1"/>
        <end position="723"/>
    </location>
</feature>
<feature type="active site" description="Proton acceptor" evidence="1">
    <location>
        <position position="97"/>
    </location>
</feature>
<feature type="binding site" description="axial binding residue" evidence="1">
    <location>
        <position position="266"/>
    </location>
    <ligand>
        <name>heme b</name>
        <dbReference type="ChEBI" id="CHEBI:60344"/>
    </ligand>
    <ligandPart>
        <name>Fe</name>
        <dbReference type="ChEBI" id="CHEBI:18248"/>
    </ligandPart>
</feature>
<feature type="site" description="Transition state stabilizer" evidence="1">
    <location>
        <position position="93"/>
    </location>
</feature>
<feature type="cross-link" description="Tryptophyl-tyrosyl-methioninium (Trp-Tyr) (with M-251)" evidence="1">
    <location>
        <begin position="96"/>
        <end position="225"/>
    </location>
</feature>
<feature type="cross-link" description="Tryptophyl-tyrosyl-methioninium (Tyr-Met) (with W-96)" evidence="1">
    <location>
        <begin position="225"/>
        <end position="251"/>
    </location>
</feature>
<accession>Q0A8G6</accession>
<name>KATG_ALKEH</name>